<evidence type="ECO:0000255" key="1"/>
<evidence type="ECO:0000255" key="2">
    <source>
        <dbReference type="PROSITE-ProRule" id="PRU00691"/>
    </source>
</evidence>
<evidence type="ECO:0000256" key="3">
    <source>
        <dbReference type="SAM" id="MobiDB-lite"/>
    </source>
</evidence>
<evidence type="ECO:0000305" key="4"/>
<keyword id="KW-0150">Chloroplast</keyword>
<keyword id="KW-1015">Disulfide bond</keyword>
<keyword id="KW-0249">Electron transport</keyword>
<keyword id="KW-0934">Plastid</keyword>
<keyword id="KW-0676">Redox-active center</keyword>
<keyword id="KW-1185">Reference proteome</keyword>
<keyword id="KW-0809">Transit peptide</keyword>
<keyword id="KW-0813">Transport</keyword>
<reference key="1">
    <citation type="journal article" date="2005" name="Genome Res.">
        <title>Sequence, annotation, and analysis of synteny between rice chromosome 3 and diverged grass species.</title>
        <authorList>
            <consortium name="The rice chromosome 3 sequencing consortium"/>
            <person name="Buell C.R."/>
            <person name="Yuan Q."/>
            <person name="Ouyang S."/>
            <person name="Liu J."/>
            <person name="Zhu W."/>
            <person name="Wang A."/>
            <person name="Maiti R."/>
            <person name="Haas B."/>
            <person name="Wortman J."/>
            <person name="Pertea M."/>
            <person name="Jones K.M."/>
            <person name="Kim M."/>
            <person name="Overton L."/>
            <person name="Tsitrin T."/>
            <person name="Fadrosh D."/>
            <person name="Bera J."/>
            <person name="Weaver B."/>
            <person name="Jin S."/>
            <person name="Johri S."/>
            <person name="Reardon M."/>
            <person name="Webb K."/>
            <person name="Hill J."/>
            <person name="Moffat K."/>
            <person name="Tallon L."/>
            <person name="Van Aken S."/>
            <person name="Lewis M."/>
            <person name="Utterback T."/>
            <person name="Feldblyum T."/>
            <person name="Zismann V."/>
            <person name="Iobst S."/>
            <person name="Hsiao J."/>
            <person name="de Vazeille A.R."/>
            <person name="Salzberg S.L."/>
            <person name="White O."/>
            <person name="Fraser C.M."/>
            <person name="Yu Y."/>
            <person name="Kim H."/>
            <person name="Rambo T."/>
            <person name="Currie J."/>
            <person name="Collura K."/>
            <person name="Kernodle-Thompson S."/>
            <person name="Wei F."/>
            <person name="Kudrna K."/>
            <person name="Ammiraju J.S.S."/>
            <person name="Luo M."/>
            <person name="Goicoechea J.L."/>
            <person name="Wing R.A."/>
            <person name="Henry D."/>
            <person name="Oates R."/>
            <person name="Palmer M."/>
            <person name="Pries G."/>
            <person name="Saski C."/>
            <person name="Simmons J."/>
            <person name="Soderlund C."/>
            <person name="Nelson W."/>
            <person name="de la Bastide M."/>
            <person name="Spiegel L."/>
            <person name="Nascimento L."/>
            <person name="Huang E."/>
            <person name="Preston R."/>
            <person name="Zutavern T."/>
            <person name="Palmer L."/>
            <person name="O'Shaughnessy A."/>
            <person name="Dike S."/>
            <person name="McCombie W.R."/>
            <person name="Minx P."/>
            <person name="Cordum H."/>
            <person name="Wilson R."/>
            <person name="Jin W."/>
            <person name="Lee H.R."/>
            <person name="Jiang J."/>
            <person name="Jackson S."/>
        </authorList>
    </citation>
    <scope>NUCLEOTIDE SEQUENCE [LARGE SCALE GENOMIC DNA]</scope>
    <source>
        <strain>cv. Nipponbare</strain>
    </source>
</reference>
<reference key="2">
    <citation type="journal article" date="2005" name="Nature">
        <title>The map-based sequence of the rice genome.</title>
        <authorList>
            <consortium name="International rice genome sequencing project (IRGSP)"/>
        </authorList>
    </citation>
    <scope>NUCLEOTIDE SEQUENCE [LARGE SCALE GENOMIC DNA]</scope>
    <source>
        <strain>cv. Nipponbare</strain>
    </source>
</reference>
<reference key="3">
    <citation type="journal article" date="2008" name="Nucleic Acids Res.">
        <title>The rice annotation project database (RAP-DB): 2008 update.</title>
        <authorList>
            <consortium name="The rice annotation project (RAP)"/>
        </authorList>
    </citation>
    <scope>GENOME REANNOTATION</scope>
    <source>
        <strain>cv. Nipponbare</strain>
    </source>
</reference>
<reference key="4">
    <citation type="journal article" date="2013" name="Rice">
        <title>Improvement of the Oryza sativa Nipponbare reference genome using next generation sequence and optical map data.</title>
        <authorList>
            <person name="Kawahara Y."/>
            <person name="de la Bastide M."/>
            <person name="Hamilton J.P."/>
            <person name="Kanamori H."/>
            <person name="McCombie W.R."/>
            <person name="Ouyang S."/>
            <person name="Schwartz D.C."/>
            <person name="Tanaka T."/>
            <person name="Wu J."/>
            <person name="Zhou S."/>
            <person name="Childs K.L."/>
            <person name="Davidson R.M."/>
            <person name="Lin H."/>
            <person name="Quesada-Ocampo L."/>
            <person name="Vaillancourt B."/>
            <person name="Sakai H."/>
            <person name="Lee S.S."/>
            <person name="Kim J."/>
            <person name="Numa H."/>
            <person name="Itoh T."/>
            <person name="Buell C.R."/>
            <person name="Matsumoto T."/>
        </authorList>
    </citation>
    <scope>GENOME REANNOTATION</scope>
    <source>
        <strain>cv. Nipponbare</strain>
    </source>
</reference>
<reference key="5">
    <citation type="journal article" date="2003" name="Science">
        <title>Collection, mapping, and annotation of over 28,000 cDNA clones from japonica rice.</title>
        <authorList>
            <consortium name="The rice full-length cDNA consortium"/>
        </authorList>
    </citation>
    <scope>NUCLEOTIDE SEQUENCE [LARGE SCALE MRNA] OF 170-279</scope>
    <source>
        <strain>cv. Nipponbare</strain>
    </source>
</reference>
<reference key="6">
    <citation type="journal article" date="2009" name="Mol. Plant">
        <title>Comparative genomic study of the thioredoxin family in photosynthetic organisms with emphasis on Populus trichocarpa.</title>
        <authorList>
            <person name="Chibani K."/>
            <person name="Wingsle G."/>
            <person name="Jacquot J.P."/>
            <person name="Gelhaye E."/>
            <person name="Rouhier N."/>
        </authorList>
    </citation>
    <scope>GENE FAMILY</scope>
    <scope>NOMENCLATURE</scope>
</reference>
<gene>
    <name type="ordered locus">Os03g0326500</name>
    <name type="ordered locus">LOC_Os03g21000</name>
</gene>
<organism>
    <name type="scientific">Oryza sativa subsp. japonica</name>
    <name type="common">Rice</name>
    <dbReference type="NCBI Taxonomy" id="39947"/>
    <lineage>
        <taxon>Eukaryota</taxon>
        <taxon>Viridiplantae</taxon>
        <taxon>Streptophyta</taxon>
        <taxon>Embryophyta</taxon>
        <taxon>Tracheophyta</taxon>
        <taxon>Spermatophyta</taxon>
        <taxon>Magnoliopsida</taxon>
        <taxon>Liliopsida</taxon>
        <taxon>Poales</taxon>
        <taxon>Poaceae</taxon>
        <taxon>BOP clade</taxon>
        <taxon>Oryzoideae</taxon>
        <taxon>Oryzeae</taxon>
        <taxon>Oryzinae</taxon>
        <taxon>Oryza</taxon>
        <taxon>Oryza sativa</taxon>
    </lineage>
</organism>
<sequence length="279" mass="30238">MAATAAQAVAVKGSVAVPPCGSRGRRRGAVASVRMAAAAATSALRIGRRSPFLGRRLAVGPRRSRPVPRNLVAPVQMNLAFAKATKWWEKGLQPNMREVESAQDLVDSLTNAGDNLVIVDFFSPGCGGCRALHPKICQIAEQNPDVLFLQVNYEEHKSMCYSLHVHVLPFFRFYRGAQGRLCSFSCTNATIKKFRDALAKHKPDRCSLGPTRGLEESELLALAANKDLQFNYTKKPELVPSGDAAAAQELDRGSTKLSPPAKPLVKQGSEERSLVSSGR</sequence>
<feature type="transit peptide" description="Chloroplast" evidence="1">
    <location>
        <begin position="1"/>
        <end position="34"/>
    </location>
</feature>
<feature type="chain" id="PRO_0000394838" description="Thioredoxin-like 1-2, chloroplastic">
    <location>
        <begin position="35"/>
        <end position="279"/>
    </location>
</feature>
<feature type="domain" description="Thioredoxin" evidence="2">
    <location>
        <begin position="61"/>
        <end position="203"/>
    </location>
</feature>
<feature type="region of interest" description="Disordered" evidence="3">
    <location>
        <begin position="242"/>
        <end position="279"/>
    </location>
</feature>
<feature type="active site" description="Nucleophile" evidence="1">
    <location>
        <position position="126"/>
    </location>
</feature>
<feature type="active site" description="Nucleophile" evidence="1">
    <location>
        <position position="129"/>
    </location>
</feature>
<feature type="disulfide bond" description="Redox-active" evidence="2">
    <location>
        <begin position="126"/>
        <end position="129"/>
    </location>
</feature>
<accession>Q10M18</accession>
<accession>Q0DS82</accession>
<proteinExistence type="evidence at transcript level"/>
<comment type="function">
    <text>Probable thiol-disulfide oxidoreductase that may participate in various redox reactions.</text>
</comment>
<comment type="subcellular location">
    <subcellularLocation>
        <location evidence="4">Plastid</location>
        <location evidence="4">Chloroplast</location>
    </subcellularLocation>
</comment>
<comment type="similarity">
    <text evidence="4">Belongs to the thioredoxin family.</text>
</comment>
<comment type="caution">
    <text evidence="4">The active site contains a CGGC motif which differs from the conserved CGPC motif.</text>
</comment>
<comment type="sequence caution" evidence="4">
    <conflict type="erroneous gene model prediction">
        <sequence resource="EMBL-CDS" id="BAF11906"/>
    </conflict>
</comment>
<dbReference type="EMBL" id="DP000009">
    <property type="protein sequence ID" value="ABF95720.1"/>
    <property type="molecule type" value="Genomic_DNA"/>
</dbReference>
<dbReference type="EMBL" id="AP008209">
    <property type="protein sequence ID" value="BAF11906.1"/>
    <property type="status" value="ALT_SEQ"/>
    <property type="molecule type" value="Genomic_DNA"/>
</dbReference>
<dbReference type="EMBL" id="AP014959">
    <property type="status" value="NOT_ANNOTATED_CDS"/>
    <property type="molecule type" value="Genomic_DNA"/>
</dbReference>
<dbReference type="EMBL" id="AK058426">
    <property type="status" value="NOT_ANNOTATED_CDS"/>
    <property type="molecule type" value="mRNA"/>
</dbReference>
<dbReference type="RefSeq" id="XP_015632287.1">
    <property type="nucleotide sequence ID" value="XM_015776801.1"/>
</dbReference>
<dbReference type="SMR" id="Q10M18"/>
<dbReference type="FunCoup" id="Q10M18">
    <property type="interactions" value="195"/>
</dbReference>
<dbReference type="STRING" id="39947.Q10M18"/>
<dbReference type="PaxDb" id="39947-Q10M18"/>
<dbReference type="KEGG" id="dosa:Os03g0326500"/>
<dbReference type="eggNOG" id="KOG0907">
    <property type="taxonomic scope" value="Eukaryota"/>
</dbReference>
<dbReference type="InParanoid" id="Q10M18"/>
<dbReference type="OrthoDB" id="2121326at2759"/>
<dbReference type="Proteomes" id="UP000000763">
    <property type="component" value="Chromosome 3"/>
</dbReference>
<dbReference type="Proteomes" id="UP000059680">
    <property type="component" value="Chromosome 3"/>
</dbReference>
<dbReference type="GO" id="GO:0009507">
    <property type="term" value="C:chloroplast"/>
    <property type="evidence" value="ECO:0000318"/>
    <property type="project" value="GO_Central"/>
</dbReference>
<dbReference type="GO" id="GO:0045454">
    <property type="term" value="P:cell redox homeostasis"/>
    <property type="evidence" value="ECO:0000318"/>
    <property type="project" value="GO_Central"/>
</dbReference>
<dbReference type="CDD" id="cd02947">
    <property type="entry name" value="TRX_family"/>
    <property type="match status" value="1"/>
</dbReference>
<dbReference type="FunFam" id="3.40.30.10:FF:000199">
    <property type="entry name" value="Thioredoxin-like 1-2, chloroplastic"/>
    <property type="match status" value="1"/>
</dbReference>
<dbReference type="Gene3D" id="3.40.30.10">
    <property type="entry name" value="Glutaredoxin"/>
    <property type="match status" value="1"/>
</dbReference>
<dbReference type="InterPro" id="IPR036249">
    <property type="entry name" value="Thioredoxin-like_sf"/>
</dbReference>
<dbReference type="InterPro" id="IPR013766">
    <property type="entry name" value="Thioredoxin_domain"/>
</dbReference>
<dbReference type="PANTHER" id="PTHR43601">
    <property type="entry name" value="THIOREDOXIN, MITOCHONDRIAL"/>
    <property type="match status" value="1"/>
</dbReference>
<dbReference type="PANTHER" id="PTHR43601:SF9">
    <property type="entry name" value="THIOREDOXIN-LIKE 1-1, CHLOROPLASTIC"/>
    <property type="match status" value="1"/>
</dbReference>
<dbReference type="Pfam" id="PF00085">
    <property type="entry name" value="Thioredoxin"/>
    <property type="match status" value="1"/>
</dbReference>
<dbReference type="SUPFAM" id="SSF52833">
    <property type="entry name" value="Thioredoxin-like"/>
    <property type="match status" value="1"/>
</dbReference>
<dbReference type="PROSITE" id="PS51352">
    <property type="entry name" value="THIOREDOXIN_2"/>
    <property type="match status" value="1"/>
</dbReference>
<name>TRL12_ORYSJ</name>
<protein>
    <recommendedName>
        <fullName>Thioredoxin-like 1-2, chloroplastic</fullName>
    </recommendedName>
    <alternativeName>
        <fullName>Lilium-type thioredoxin 1-2</fullName>
    </alternativeName>
</protein>